<name>RS3A2_VITVI</name>
<proteinExistence type="inferred from homology"/>
<evidence type="ECO:0000255" key="1">
    <source>
        <dbReference type="HAMAP-Rule" id="MF_03122"/>
    </source>
</evidence>
<evidence type="ECO:0000256" key="2">
    <source>
        <dbReference type="SAM" id="MobiDB-lite"/>
    </source>
</evidence>
<evidence type="ECO:0000305" key="3"/>
<sequence length="234" mass="27036">MAVGKNKRISKGKKGGKKKAADPFAKKDWYDIKAPSIFSVRNVGKTLVSRTQGTKIASEGLKHRVFEISLADLQNDEDHAYRKIRLRAEDVQGKNVLTNFWGMDFTTDKLRSLVRKWQTLIEAHVDVKTTDNYTLRMFCIAFTKKRQNQNKKTSYAQSSQIRQIRRKMREIMTTQAASCDLKELVRKFIPEMIGREIEKATSSIYPLQNVFIRKVKILKAPKFDLGKLMEACSW</sequence>
<feature type="initiator methionine" description="Removed" evidence="1">
    <location>
        <position position="1"/>
    </location>
</feature>
<feature type="chain" id="PRO_0000389333" description="Small ribosomal subunit protein eS1y">
    <location>
        <begin position="2"/>
        <end position="234"/>
    </location>
</feature>
<feature type="region of interest" description="Disordered" evidence="2">
    <location>
        <begin position="1"/>
        <end position="20"/>
    </location>
</feature>
<feature type="compositionally biased region" description="Basic residues" evidence="2">
    <location>
        <begin position="1"/>
        <end position="18"/>
    </location>
</feature>
<accession>A7Q5X9</accession>
<reference key="1">
    <citation type="journal article" date="2007" name="Nature">
        <title>The grapevine genome sequence suggests ancestral hexaploidization in major angiosperm phyla.</title>
        <authorList>
            <person name="Jaillon O."/>
            <person name="Aury J.-M."/>
            <person name="Noel B."/>
            <person name="Policriti A."/>
            <person name="Clepet C."/>
            <person name="Casagrande A."/>
            <person name="Choisne N."/>
            <person name="Aubourg S."/>
            <person name="Vitulo N."/>
            <person name="Jubin C."/>
            <person name="Vezzi A."/>
            <person name="Legeai F."/>
            <person name="Hugueney P."/>
            <person name="Dasilva C."/>
            <person name="Horner D."/>
            <person name="Mica E."/>
            <person name="Jublot D."/>
            <person name="Poulain J."/>
            <person name="Bruyere C."/>
            <person name="Billault A."/>
            <person name="Segurens B."/>
            <person name="Gouyvenoux M."/>
            <person name="Ugarte E."/>
            <person name="Cattonaro F."/>
            <person name="Anthouard V."/>
            <person name="Vico V."/>
            <person name="Del Fabbro C."/>
            <person name="Alaux M."/>
            <person name="Di Gaspero G."/>
            <person name="Dumas V."/>
            <person name="Felice N."/>
            <person name="Paillard S."/>
            <person name="Juman I."/>
            <person name="Moroldo M."/>
            <person name="Scalabrin S."/>
            <person name="Canaguier A."/>
            <person name="Le Clainche I."/>
            <person name="Malacrida G."/>
            <person name="Durand E."/>
            <person name="Pesole G."/>
            <person name="Laucou V."/>
            <person name="Chatelet P."/>
            <person name="Merdinoglu D."/>
            <person name="Delledonne M."/>
            <person name="Pezzotti M."/>
            <person name="Lecharny A."/>
            <person name="Scarpelli C."/>
            <person name="Artiguenave F."/>
            <person name="Pe M.E."/>
            <person name="Valle G."/>
            <person name="Morgante M."/>
            <person name="Caboche M."/>
            <person name="Adam-Blondon A.-F."/>
            <person name="Weissenbach J."/>
            <person name="Quetier F."/>
            <person name="Wincker P."/>
        </authorList>
    </citation>
    <scope>NUCLEOTIDE SEQUENCE [LARGE SCALE GENOMIC DNA]</scope>
    <source>
        <strain>cv. Pinot noir / PN40024</strain>
    </source>
</reference>
<comment type="subunit">
    <text evidence="1">Component of the small ribosomal subunit. Mature ribosomes consist of a small (40S) and a large (60S) subunit. The 40S subunit contains about 33 different proteins and 1 molecule of RNA (18S). The 60S subunit contains about 49 different proteins and 3 molecules of RNA (25S, 5.8S and 5S).</text>
</comment>
<comment type="subcellular location">
    <subcellularLocation>
        <location evidence="1">Cytoplasm</location>
    </subcellularLocation>
</comment>
<comment type="similarity">
    <text evidence="1">Belongs to the eukaryotic ribosomal protein eS1 family.</text>
</comment>
<organism>
    <name type="scientific">Vitis vinifera</name>
    <name type="common">Grape</name>
    <dbReference type="NCBI Taxonomy" id="29760"/>
    <lineage>
        <taxon>Eukaryota</taxon>
        <taxon>Viridiplantae</taxon>
        <taxon>Streptophyta</taxon>
        <taxon>Embryophyta</taxon>
        <taxon>Tracheophyta</taxon>
        <taxon>Spermatophyta</taxon>
        <taxon>Magnoliopsida</taxon>
        <taxon>eudicotyledons</taxon>
        <taxon>Gunneridae</taxon>
        <taxon>Pentapetalae</taxon>
        <taxon>rosids</taxon>
        <taxon>Vitales</taxon>
        <taxon>Vitaceae</taxon>
        <taxon>Viteae</taxon>
        <taxon>Vitis</taxon>
    </lineage>
</organism>
<gene>
    <name type="ORF">GSVIVT00031140001</name>
    <name type="ORF">LOC100232969</name>
</gene>
<protein>
    <recommendedName>
        <fullName evidence="1">Small ribosomal subunit protein eS1y</fullName>
    </recommendedName>
    <alternativeName>
        <fullName evidence="3">40S ribosomal protein S3a-2</fullName>
    </alternativeName>
</protein>
<dbReference type="SMR" id="A7Q5X9"/>
<dbReference type="eggNOG" id="KOG1628">
    <property type="taxonomic scope" value="Eukaryota"/>
</dbReference>
<dbReference type="ExpressionAtlas" id="A7Q5X9">
    <property type="expression patterns" value="baseline and differential"/>
</dbReference>
<dbReference type="GO" id="GO:0022627">
    <property type="term" value="C:cytosolic small ribosomal subunit"/>
    <property type="evidence" value="ECO:0007669"/>
    <property type="project" value="UniProtKB-UniRule"/>
</dbReference>
<dbReference type="GO" id="GO:0003735">
    <property type="term" value="F:structural constituent of ribosome"/>
    <property type="evidence" value="ECO:0007669"/>
    <property type="project" value="UniProtKB-UniRule"/>
</dbReference>
<dbReference type="GO" id="GO:0006412">
    <property type="term" value="P:translation"/>
    <property type="evidence" value="ECO:0007669"/>
    <property type="project" value="UniProtKB-UniRule"/>
</dbReference>
<dbReference type="HAMAP" id="MF_03122">
    <property type="entry name" value="Ribosomal_eS1_euk"/>
    <property type="match status" value="1"/>
</dbReference>
<dbReference type="InterPro" id="IPR001593">
    <property type="entry name" value="Ribosomal_eS1"/>
</dbReference>
<dbReference type="InterPro" id="IPR018281">
    <property type="entry name" value="Ribosomal_eS1_CS"/>
</dbReference>
<dbReference type="InterPro" id="IPR027500">
    <property type="entry name" value="Ribosomal_eS1_euk"/>
</dbReference>
<dbReference type="PANTHER" id="PTHR11830">
    <property type="entry name" value="40S RIBOSOMAL PROTEIN S3A"/>
    <property type="match status" value="1"/>
</dbReference>
<dbReference type="Pfam" id="PF01015">
    <property type="entry name" value="Ribosomal_S3Ae"/>
    <property type="match status" value="1"/>
</dbReference>
<dbReference type="SMART" id="SM01397">
    <property type="entry name" value="Ribosomal_S3Ae"/>
    <property type="match status" value="1"/>
</dbReference>
<dbReference type="PROSITE" id="PS01191">
    <property type="entry name" value="RIBOSOMAL_S3AE"/>
    <property type="match status" value="1"/>
</dbReference>
<keyword id="KW-0963">Cytoplasm</keyword>
<keyword id="KW-0687">Ribonucleoprotein</keyword>
<keyword id="KW-0689">Ribosomal protein</keyword>